<evidence type="ECO:0000255" key="1"/>
<evidence type="ECO:0000255" key="2">
    <source>
        <dbReference type="PROSITE-ProRule" id="PRU00714"/>
    </source>
</evidence>
<evidence type="ECO:0000256" key="3">
    <source>
        <dbReference type="SAM" id="MobiDB-lite"/>
    </source>
</evidence>
<evidence type="ECO:0000305" key="4"/>
<proteinExistence type="evidence at transcript level"/>
<dbReference type="EMBL" id="AC010795">
    <property type="protein sequence ID" value="AAG51602.1"/>
    <property type="status" value="ALT_SEQ"/>
    <property type="molecule type" value="Genomic_DNA"/>
</dbReference>
<dbReference type="EMBL" id="AC011000">
    <property type="protein sequence ID" value="AAF75814.1"/>
    <property type="molecule type" value="Genomic_DNA"/>
</dbReference>
<dbReference type="EMBL" id="CP002684">
    <property type="protein sequence ID" value="AEE34037.1"/>
    <property type="molecule type" value="Genomic_DNA"/>
</dbReference>
<dbReference type="EMBL" id="AK230262">
    <property type="protein sequence ID" value="BAF02064.1"/>
    <property type="molecule type" value="mRNA"/>
</dbReference>
<dbReference type="EMBL" id="AY035094">
    <property type="protein sequence ID" value="AAK59599.1"/>
    <property type="molecule type" value="mRNA"/>
</dbReference>
<dbReference type="PIR" id="C96655">
    <property type="entry name" value="C96655"/>
</dbReference>
<dbReference type="RefSeq" id="NP_001077762.1">
    <property type="nucleotide sequence ID" value="NM_001084293.1"/>
</dbReference>
<dbReference type="RefSeq" id="NP_001077763.1">
    <property type="nucleotide sequence ID" value="NM_001084294.2"/>
</dbReference>
<dbReference type="RefSeq" id="NP_001322578.1">
    <property type="nucleotide sequence ID" value="NM_001334059.1"/>
</dbReference>
<dbReference type="RefSeq" id="NP_001322579.1">
    <property type="nucleotide sequence ID" value="NM_001334060.1"/>
</dbReference>
<dbReference type="RefSeq" id="NP_564807.2">
    <property type="nucleotide sequence ID" value="NM_104979.4"/>
</dbReference>
<dbReference type="RefSeq" id="NP_974073.2">
    <molecule id="Q2V4F9-1"/>
    <property type="nucleotide sequence ID" value="NM_202344.2"/>
</dbReference>
<dbReference type="FunCoup" id="Q2V4F9">
    <property type="interactions" value="183"/>
</dbReference>
<dbReference type="STRING" id="3702.Q2V4F9"/>
<dbReference type="TCDB" id="2.A.1.2.61">
    <property type="family name" value="the major facilitator superfamily (mfs)"/>
</dbReference>
<dbReference type="PaxDb" id="3702-AT1G63010.5"/>
<dbReference type="ProteomicsDB" id="245248">
    <molecule id="Q2V4F9-1"/>
</dbReference>
<dbReference type="EnsemblPlants" id="AT1G63010.2">
    <molecule id="Q2V4F9-1"/>
    <property type="protein sequence ID" value="AT1G63010.2"/>
    <property type="gene ID" value="AT1G63010"/>
</dbReference>
<dbReference type="GeneID" id="842604"/>
<dbReference type="Gramene" id="AT1G63010.2">
    <molecule id="Q2V4F9-1"/>
    <property type="protein sequence ID" value="AT1G63010.2"/>
    <property type="gene ID" value="AT1G63010"/>
</dbReference>
<dbReference type="KEGG" id="ath:AT1G63010"/>
<dbReference type="Araport" id="AT1G63010"/>
<dbReference type="TAIR" id="AT1G63010">
    <property type="gene designation" value="VPT1"/>
</dbReference>
<dbReference type="eggNOG" id="KOG1161">
    <property type="taxonomic scope" value="Eukaryota"/>
</dbReference>
<dbReference type="eggNOG" id="KOG2325">
    <property type="taxonomic scope" value="Eukaryota"/>
</dbReference>
<dbReference type="HOGENOM" id="CLU_025236_1_0_1"/>
<dbReference type="InParanoid" id="Q2V4F9"/>
<dbReference type="OMA" id="ITMNANT"/>
<dbReference type="PhylomeDB" id="Q2V4F9"/>
<dbReference type="PRO" id="PR:Q2V4F9"/>
<dbReference type="Proteomes" id="UP000006548">
    <property type="component" value="Chromosome 1"/>
</dbReference>
<dbReference type="ExpressionAtlas" id="Q2V4F9">
    <property type="expression patterns" value="baseline and differential"/>
</dbReference>
<dbReference type="GO" id="GO:0016020">
    <property type="term" value="C:membrane"/>
    <property type="evidence" value="ECO:0007669"/>
    <property type="project" value="UniProtKB-SubCell"/>
</dbReference>
<dbReference type="GO" id="GO:0022857">
    <property type="term" value="F:transmembrane transporter activity"/>
    <property type="evidence" value="ECO:0007669"/>
    <property type="project" value="InterPro"/>
</dbReference>
<dbReference type="CDD" id="cd14479">
    <property type="entry name" value="SPX-MFS_plant"/>
    <property type="match status" value="1"/>
</dbReference>
<dbReference type="Gene3D" id="1.20.1250.20">
    <property type="entry name" value="MFS general substrate transporter like domains"/>
    <property type="match status" value="1"/>
</dbReference>
<dbReference type="InterPro" id="IPR011701">
    <property type="entry name" value="MFS"/>
</dbReference>
<dbReference type="InterPro" id="IPR051068">
    <property type="entry name" value="MFS_Domain-Containing_Protein"/>
</dbReference>
<dbReference type="InterPro" id="IPR036259">
    <property type="entry name" value="MFS_trans_sf"/>
</dbReference>
<dbReference type="InterPro" id="IPR004331">
    <property type="entry name" value="SPX_dom"/>
</dbReference>
<dbReference type="InterPro" id="IPR045264">
    <property type="entry name" value="SPXM_SPX_plant"/>
</dbReference>
<dbReference type="PANTHER" id="PTHR23510">
    <property type="entry name" value="INNER MEMBRANE TRANSPORT PROTEIN YAJR"/>
    <property type="match status" value="1"/>
</dbReference>
<dbReference type="PANTHER" id="PTHR23510:SF62">
    <property type="entry name" value="SPX DOMAIN-CONTAINING PROTEIN"/>
    <property type="match status" value="1"/>
</dbReference>
<dbReference type="Pfam" id="PF07690">
    <property type="entry name" value="MFS_1"/>
    <property type="match status" value="1"/>
</dbReference>
<dbReference type="Pfam" id="PF03105">
    <property type="entry name" value="SPX"/>
    <property type="match status" value="1"/>
</dbReference>
<dbReference type="SUPFAM" id="SSF103473">
    <property type="entry name" value="MFS general substrate transporter"/>
    <property type="match status" value="1"/>
</dbReference>
<dbReference type="PROSITE" id="PS51382">
    <property type="entry name" value="SPX"/>
    <property type="match status" value="1"/>
</dbReference>
<gene>
    <name type="ordered locus">At1g63010</name>
    <name type="ORF">F16M19.18</name>
    <name type="ORF">F16P17.18</name>
</gene>
<feature type="chain" id="PRO_0000300104" description="SPX domain-containing membrane protein At1g63010">
    <location>
        <begin position="1"/>
        <end position="697"/>
    </location>
</feature>
<feature type="transmembrane region" description="Helical" evidence="1">
    <location>
        <begin position="247"/>
        <end position="267"/>
    </location>
</feature>
<feature type="transmembrane region" description="Helical" evidence="1">
    <location>
        <begin position="278"/>
        <end position="298"/>
    </location>
</feature>
<feature type="transmembrane region" description="Helical" evidence="1">
    <location>
        <begin position="315"/>
        <end position="335"/>
    </location>
</feature>
<feature type="transmembrane region" description="Helical" evidence="1">
    <location>
        <begin position="337"/>
        <end position="356"/>
    </location>
</feature>
<feature type="transmembrane region" description="Helical" evidence="1">
    <location>
        <begin position="375"/>
        <end position="395"/>
    </location>
</feature>
<feature type="transmembrane region" description="Helical" evidence="1">
    <location>
        <begin position="411"/>
        <end position="431"/>
    </location>
</feature>
<feature type="transmembrane region" description="Helical" evidence="1">
    <location>
        <begin position="513"/>
        <end position="533"/>
    </location>
</feature>
<feature type="transmembrane region" description="Helical" evidence="1">
    <location>
        <begin position="544"/>
        <end position="564"/>
    </location>
</feature>
<feature type="transmembrane region" description="Helical" evidence="1">
    <location>
        <begin position="576"/>
        <end position="596"/>
    </location>
</feature>
<feature type="transmembrane region" description="Helical" evidence="1">
    <location>
        <begin position="604"/>
        <end position="624"/>
    </location>
</feature>
<feature type="transmembrane region" description="Helical" evidence="1">
    <location>
        <begin position="670"/>
        <end position="690"/>
    </location>
</feature>
<feature type="domain" description="SPX" evidence="2">
    <location>
        <begin position="2"/>
        <end position="145"/>
    </location>
</feature>
<feature type="region of interest" description="Disordered" evidence="3">
    <location>
        <begin position="439"/>
        <end position="459"/>
    </location>
</feature>
<keyword id="KW-0025">Alternative splicing</keyword>
<keyword id="KW-0472">Membrane</keyword>
<keyword id="KW-1185">Reference proteome</keyword>
<keyword id="KW-0812">Transmembrane</keyword>
<keyword id="KW-1133">Transmembrane helix</keyword>
<organism>
    <name type="scientific">Arabidopsis thaliana</name>
    <name type="common">Mouse-ear cress</name>
    <dbReference type="NCBI Taxonomy" id="3702"/>
    <lineage>
        <taxon>Eukaryota</taxon>
        <taxon>Viridiplantae</taxon>
        <taxon>Streptophyta</taxon>
        <taxon>Embryophyta</taxon>
        <taxon>Tracheophyta</taxon>
        <taxon>Spermatophyta</taxon>
        <taxon>Magnoliopsida</taxon>
        <taxon>eudicotyledons</taxon>
        <taxon>Gunneridae</taxon>
        <taxon>Pentapetalae</taxon>
        <taxon>rosids</taxon>
        <taxon>malvids</taxon>
        <taxon>Brassicales</taxon>
        <taxon>Brassicaceae</taxon>
        <taxon>Camelineae</taxon>
        <taxon>Arabidopsis</taxon>
    </lineage>
</organism>
<protein>
    <recommendedName>
        <fullName>SPX domain-containing membrane protein At1g63010</fullName>
    </recommendedName>
</protein>
<reference key="1">
    <citation type="journal article" date="2000" name="Nature">
        <title>Sequence and analysis of chromosome 1 of the plant Arabidopsis thaliana.</title>
        <authorList>
            <person name="Theologis A."/>
            <person name="Ecker J.R."/>
            <person name="Palm C.J."/>
            <person name="Federspiel N.A."/>
            <person name="Kaul S."/>
            <person name="White O."/>
            <person name="Alonso J."/>
            <person name="Altafi H."/>
            <person name="Araujo R."/>
            <person name="Bowman C.L."/>
            <person name="Brooks S.Y."/>
            <person name="Buehler E."/>
            <person name="Chan A."/>
            <person name="Chao Q."/>
            <person name="Chen H."/>
            <person name="Cheuk R.F."/>
            <person name="Chin C.W."/>
            <person name="Chung M.K."/>
            <person name="Conn L."/>
            <person name="Conway A.B."/>
            <person name="Conway A.R."/>
            <person name="Creasy T.H."/>
            <person name="Dewar K."/>
            <person name="Dunn P."/>
            <person name="Etgu P."/>
            <person name="Feldblyum T.V."/>
            <person name="Feng J.-D."/>
            <person name="Fong B."/>
            <person name="Fujii C.Y."/>
            <person name="Gill J.E."/>
            <person name="Goldsmith A.D."/>
            <person name="Haas B."/>
            <person name="Hansen N.F."/>
            <person name="Hughes B."/>
            <person name="Huizar L."/>
            <person name="Hunter J.L."/>
            <person name="Jenkins J."/>
            <person name="Johnson-Hopson C."/>
            <person name="Khan S."/>
            <person name="Khaykin E."/>
            <person name="Kim C.J."/>
            <person name="Koo H.L."/>
            <person name="Kremenetskaia I."/>
            <person name="Kurtz D.B."/>
            <person name="Kwan A."/>
            <person name="Lam B."/>
            <person name="Langin-Hooper S."/>
            <person name="Lee A."/>
            <person name="Lee J.M."/>
            <person name="Lenz C.A."/>
            <person name="Li J.H."/>
            <person name="Li Y.-P."/>
            <person name="Lin X."/>
            <person name="Liu S.X."/>
            <person name="Liu Z.A."/>
            <person name="Luros J.S."/>
            <person name="Maiti R."/>
            <person name="Marziali A."/>
            <person name="Militscher J."/>
            <person name="Miranda M."/>
            <person name="Nguyen M."/>
            <person name="Nierman W.C."/>
            <person name="Osborne B.I."/>
            <person name="Pai G."/>
            <person name="Peterson J."/>
            <person name="Pham P.K."/>
            <person name="Rizzo M."/>
            <person name="Rooney T."/>
            <person name="Rowley D."/>
            <person name="Sakano H."/>
            <person name="Salzberg S.L."/>
            <person name="Schwartz J.R."/>
            <person name="Shinn P."/>
            <person name="Southwick A.M."/>
            <person name="Sun H."/>
            <person name="Tallon L.J."/>
            <person name="Tambunga G."/>
            <person name="Toriumi M.J."/>
            <person name="Town C.D."/>
            <person name="Utterback T."/>
            <person name="Van Aken S."/>
            <person name="Vaysberg M."/>
            <person name="Vysotskaia V.S."/>
            <person name="Walker M."/>
            <person name="Wu D."/>
            <person name="Yu G."/>
            <person name="Fraser C.M."/>
            <person name="Venter J.C."/>
            <person name="Davis R.W."/>
        </authorList>
    </citation>
    <scope>NUCLEOTIDE SEQUENCE [LARGE SCALE GENOMIC DNA]</scope>
    <source>
        <strain>cv. Columbia</strain>
    </source>
</reference>
<reference key="2">
    <citation type="journal article" date="2017" name="Plant J.">
        <title>Araport11: a complete reannotation of the Arabidopsis thaliana reference genome.</title>
        <authorList>
            <person name="Cheng C.Y."/>
            <person name="Krishnakumar V."/>
            <person name="Chan A.P."/>
            <person name="Thibaud-Nissen F."/>
            <person name="Schobel S."/>
            <person name="Town C.D."/>
        </authorList>
    </citation>
    <scope>GENOME REANNOTATION</scope>
    <source>
        <strain>cv. Columbia</strain>
    </source>
</reference>
<reference key="3">
    <citation type="submission" date="2006-07" db="EMBL/GenBank/DDBJ databases">
        <title>Large-scale analysis of RIKEN Arabidopsis full-length (RAFL) cDNAs.</title>
        <authorList>
            <person name="Totoki Y."/>
            <person name="Seki M."/>
            <person name="Ishida J."/>
            <person name="Nakajima M."/>
            <person name="Enju A."/>
            <person name="Kamiya A."/>
            <person name="Narusaka M."/>
            <person name="Shin-i T."/>
            <person name="Nakagawa M."/>
            <person name="Sakamoto N."/>
            <person name="Oishi K."/>
            <person name="Kohara Y."/>
            <person name="Kobayashi M."/>
            <person name="Toyoda A."/>
            <person name="Sakaki Y."/>
            <person name="Sakurai T."/>
            <person name="Iida K."/>
            <person name="Akiyama K."/>
            <person name="Satou M."/>
            <person name="Toyoda T."/>
            <person name="Konagaya A."/>
            <person name="Carninci P."/>
            <person name="Kawai J."/>
            <person name="Hayashizaki Y."/>
            <person name="Shinozaki K."/>
        </authorList>
    </citation>
    <scope>NUCLEOTIDE SEQUENCE [LARGE SCALE MRNA]</scope>
    <source>
        <strain>cv. Columbia</strain>
    </source>
</reference>
<reference key="4">
    <citation type="journal article" date="2003" name="Science">
        <title>Empirical analysis of transcriptional activity in the Arabidopsis genome.</title>
        <authorList>
            <person name="Yamada K."/>
            <person name="Lim J."/>
            <person name="Dale J.M."/>
            <person name="Chen H."/>
            <person name="Shinn P."/>
            <person name="Palm C.J."/>
            <person name="Southwick A.M."/>
            <person name="Wu H.C."/>
            <person name="Kim C.J."/>
            <person name="Nguyen M."/>
            <person name="Pham P.K."/>
            <person name="Cheuk R.F."/>
            <person name="Karlin-Newmann G."/>
            <person name="Liu S.X."/>
            <person name="Lam B."/>
            <person name="Sakano H."/>
            <person name="Wu T."/>
            <person name="Yu G."/>
            <person name="Miranda M."/>
            <person name="Quach H.L."/>
            <person name="Tripp M."/>
            <person name="Chang C.H."/>
            <person name="Lee J.M."/>
            <person name="Toriumi M.J."/>
            <person name="Chan M.M."/>
            <person name="Tang C.C."/>
            <person name="Onodera C.S."/>
            <person name="Deng J.M."/>
            <person name="Akiyama K."/>
            <person name="Ansari Y."/>
            <person name="Arakawa T."/>
            <person name="Banh J."/>
            <person name="Banno F."/>
            <person name="Bowser L."/>
            <person name="Brooks S.Y."/>
            <person name="Carninci P."/>
            <person name="Chao Q."/>
            <person name="Choy N."/>
            <person name="Enju A."/>
            <person name="Goldsmith A.D."/>
            <person name="Gurjal M."/>
            <person name="Hansen N.F."/>
            <person name="Hayashizaki Y."/>
            <person name="Johnson-Hopson C."/>
            <person name="Hsuan V.W."/>
            <person name="Iida K."/>
            <person name="Karnes M."/>
            <person name="Khan S."/>
            <person name="Koesema E."/>
            <person name="Ishida J."/>
            <person name="Jiang P.X."/>
            <person name="Jones T."/>
            <person name="Kawai J."/>
            <person name="Kamiya A."/>
            <person name="Meyers C."/>
            <person name="Nakajima M."/>
            <person name="Narusaka M."/>
            <person name="Seki M."/>
            <person name="Sakurai T."/>
            <person name="Satou M."/>
            <person name="Tamse R."/>
            <person name="Vaysberg M."/>
            <person name="Wallender E.K."/>
            <person name="Wong C."/>
            <person name="Yamamura Y."/>
            <person name="Yuan S."/>
            <person name="Shinozaki K."/>
            <person name="Davis R.W."/>
            <person name="Theologis A."/>
            <person name="Ecker J.R."/>
        </authorList>
    </citation>
    <scope>NUCLEOTIDE SEQUENCE [LARGE SCALE MRNA] OF 54-697</scope>
    <source>
        <strain>cv. Columbia</strain>
    </source>
</reference>
<sequence length="697" mass="78051">MVAFGKYLQRKQIEEWSGYYINYKLMKKKVKQYAEQIQGGSQHPRHVLKDFSRMLDTQIETTVLFMLEQQGLLSGRLAKLRESHDAILEQPDISRIFELREAYRDVGRDLLQLLKFVELNAIGLRKILKKFDKRFGYRFADYYVKTRANHPYSQLQQVFKHVGVGAVVGAISRNLHELQENEGSFYSIYDQPVLPAQDPVVEAINNAVDKLTFSTNFLNFLAQHALIMQDDLVTPSEDTIDERSYHFNSLLLNLGNTFLYMVNTYIIVPTADDYSMSLGAAATVCGVVIGSMAVAQVFSSVYFSAWSNKSYFKPLVFSSIALFIGNLMYALAYDANSIALLLLGRVCCGLGSARAVNRRYISDCVPLRIRMQASAGFVSASALGMACGPALAGLLQIKFKFYKFTFNQSTLPGWVMAVAWLFYLVWLCISFREPLRDTEDGEKNNRNETTSDRVESSRVEEGLRLPLLITSGIKPEDEEECDESEESPEDSHKPANSFIEAYRLLTPSVKVQLLIYFMLKYSMEILLSESSVITSYYFSWTTSSVAIFLACLGLTVLPINILVGSYISNMFEDRQILLTSEIIVFLGILFSFNLFVPYTVPQYVISGLIMFVAAEVLEGVNLSLLSRVMSSRLSKGTYNGGLLSTEAGTLARVVADATITLGGYLGRGHLLNATLLPSLVICIGSIVATCCTYNSLY</sequence>
<comment type="subcellular location">
    <subcellularLocation>
        <location evidence="1">Membrane</location>
        <topology evidence="1">Multi-pass membrane protein</topology>
    </subcellularLocation>
</comment>
<comment type="alternative products">
    <event type="alternative splicing"/>
    <isoform>
        <id>Q2V4F9-1</id>
        <name>1</name>
        <sequence type="displayed"/>
    </isoform>
    <text>A number of isoforms are produced. According to EST sequences.</text>
</comment>
<comment type="similarity">
    <text evidence="4">Belongs to the major facilitator superfamily.</text>
</comment>
<comment type="sequence caution" evidence="4">
    <conflict type="erroneous gene model prediction">
        <sequence resource="EMBL-CDS" id="AAG51602"/>
    </conflict>
</comment>
<name>SPXM1_ARATH</name>
<accession>Q2V4F9</accession>
<accession>Q94C80</accession>
<accession>Q9CAP0</accession>
<accession>Q9LQ03</accession>